<accession>Q7MNM8</accession>
<proteinExistence type="inferred from homology"/>
<name>SYI_VIBVY</name>
<dbReference type="EC" id="6.1.1.5" evidence="1"/>
<dbReference type="EMBL" id="BA000037">
    <property type="protein sequence ID" value="BAC93451.1"/>
    <property type="molecule type" value="Genomic_DNA"/>
</dbReference>
<dbReference type="RefSeq" id="WP_011149552.1">
    <property type="nucleotide sequence ID" value="NC_005139.1"/>
</dbReference>
<dbReference type="SMR" id="Q7MNM8"/>
<dbReference type="STRING" id="672.VV93_v1c06270"/>
<dbReference type="KEGG" id="vvy:VV0687"/>
<dbReference type="PATRIC" id="fig|196600.6.peg.707"/>
<dbReference type="eggNOG" id="COG0060">
    <property type="taxonomic scope" value="Bacteria"/>
</dbReference>
<dbReference type="HOGENOM" id="CLU_001493_7_1_6"/>
<dbReference type="Proteomes" id="UP000002675">
    <property type="component" value="Chromosome I"/>
</dbReference>
<dbReference type="GO" id="GO:0005829">
    <property type="term" value="C:cytosol"/>
    <property type="evidence" value="ECO:0007669"/>
    <property type="project" value="TreeGrafter"/>
</dbReference>
<dbReference type="GO" id="GO:0002161">
    <property type="term" value="F:aminoacyl-tRNA deacylase activity"/>
    <property type="evidence" value="ECO:0007669"/>
    <property type="project" value="InterPro"/>
</dbReference>
<dbReference type="GO" id="GO:0005524">
    <property type="term" value="F:ATP binding"/>
    <property type="evidence" value="ECO:0007669"/>
    <property type="project" value="UniProtKB-UniRule"/>
</dbReference>
<dbReference type="GO" id="GO:0004822">
    <property type="term" value="F:isoleucine-tRNA ligase activity"/>
    <property type="evidence" value="ECO:0007669"/>
    <property type="project" value="UniProtKB-UniRule"/>
</dbReference>
<dbReference type="GO" id="GO:0000049">
    <property type="term" value="F:tRNA binding"/>
    <property type="evidence" value="ECO:0007669"/>
    <property type="project" value="InterPro"/>
</dbReference>
<dbReference type="GO" id="GO:0008270">
    <property type="term" value="F:zinc ion binding"/>
    <property type="evidence" value="ECO:0007669"/>
    <property type="project" value="UniProtKB-UniRule"/>
</dbReference>
<dbReference type="GO" id="GO:0006428">
    <property type="term" value="P:isoleucyl-tRNA aminoacylation"/>
    <property type="evidence" value="ECO:0007669"/>
    <property type="project" value="UniProtKB-UniRule"/>
</dbReference>
<dbReference type="CDD" id="cd07960">
    <property type="entry name" value="Anticodon_Ia_Ile_BEm"/>
    <property type="match status" value="1"/>
</dbReference>
<dbReference type="CDD" id="cd00818">
    <property type="entry name" value="IleRS_core"/>
    <property type="match status" value="1"/>
</dbReference>
<dbReference type="FunFam" id="1.10.730.20:FF:000001">
    <property type="entry name" value="Isoleucine--tRNA ligase"/>
    <property type="match status" value="1"/>
</dbReference>
<dbReference type="FunFam" id="3.40.50.620:FF:000048">
    <property type="entry name" value="Isoleucine--tRNA ligase"/>
    <property type="match status" value="1"/>
</dbReference>
<dbReference type="FunFam" id="3.40.50.620:FF:000168">
    <property type="entry name" value="Isoleucine--tRNA ligase"/>
    <property type="match status" value="1"/>
</dbReference>
<dbReference type="Gene3D" id="1.10.730.20">
    <property type="match status" value="1"/>
</dbReference>
<dbReference type="Gene3D" id="3.40.50.620">
    <property type="entry name" value="HUPs"/>
    <property type="match status" value="2"/>
</dbReference>
<dbReference type="Gene3D" id="1.10.10.830">
    <property type="entry name" value="Ile-tRNA synthetase CP2 domain-like"/>
    <property type="match status" value="1"/>
</dbReference>
<dbReference type="HAMAP" id="MF_02002">
    <property type="entry name" value="Ile_tRNA_synth_type1"/>
    <property type="match status" value="1"/>
</dbReference>
<dbReference type="InterPro" id="IPR001412">
    <property type="entry name" value="aa-tRNA-synth_I_CS"/>
</dbReference>
<dbReference type="InterPro" id="IPR002300">
    <property type="entry name" value="aa-tRNA-synth_Ia"/>
</dbReference>
<dbReference type="InterPro" id="IPR033708">
    <property type="entry name" value="Anticodon_Ile_BEm"/>
</dbReference>
<dbReference type="InterPro" id="IPR002301">
    <property type="entry name" value="Ile-tRNA-ligase"/>
</dbReference>
<dbReference type="InterPro" id="IPR023585">
    <property type="entry name" value="Ile-tRNA-ligase_type1"/>
</dbReference>
<dbReference type="InterPro" id="IPR050081">
    <property type="entry name" value="Ile-tRNA_ligase"/>
</dbReference>
<dbReference type="InterPro" id="IPR013155">
    <property type="entry name" value="M/V/L/I-tRNA-synth_anticd-bd"/>
</dbReference>
<dbReference type="InterPro" id="IPR014729">
    <property type="entry name" value="Rossmann-like_a/b/a_fold"/>
</dbReference>
<dbReference type="InterPro" id="IPR009080">
    <property type="entry name" value="tRNAsynth_Ia_anticodon-bd"/>
</dbReference>
<dbReference type="InterPro" id="IPR009008">
    <property type="entry name" value="Val/Leu/Ile-tRNA-synth_edit"/>
</dbReference>
<dbReference type="InterPro" id="IPR010663">
    <property type="entry name" value="Znf_FPG/IleRS"/>
</dbReference>
<dbReference type="NCBIfam" id="TIGR00392">
    <property type="entry name" value="ileS"/>
    <property type="match status" value="1"/>
</dbReference>
<dbReference type="PANTHER" id="PTHR42765:SF1">
    <property type="entry name" value="ISOLEUCINE--TRNA LIGASE, MITOCHONDRIAL"/>
    <property type="match status" value="1"/>
</dbReference>
<dbReference type="PANTHER" id="PTHR42765">
    <property type="entry name" value="SOLEUCYL-TRNA SYNTHETASE"/>
    <property type="match status" value="1"/>
</dbReference>
<dbReference type="Pfam" id="PF08264">
    <property type="entry name" value="Anticodon_1"/>
    <property type="match status" value="1"/>
</dbReference>
<dbReference type="Pfam" id="PF00133">
    <property type="entry name" value="tRNA-synt_1"/>
    <property type="match status" value="1"/>
</dbReference>
<dbReference type="Pfam" id="PF06827">
    <property type="entry name" value="zf-FPG_IleRS"/>
    <property type="match status" value="1"/>
</dbReference>
<dbReference type="PRINTS" id="PR00984">
    <property type="entry name" value="TRNASYNTHILE"/>
</dbReference>
<dbReference type="SUPFAM" id="SSF47323">
    <property type="entry name" value="Anticodon-binding domain of a subclass of class I aminoacyl-tRNA synthetases"/>
    <property type="match status" value="1"/>
</dbReference>
<dbReference type="SUPFAM" id="SSF52374">
    <property type="entry name" value="Nucleotidylyl transferase"/>
    <property type="match status" value="1"/>
</dbReference>
<dbReference type="SUPFAM" id="SSF50677">
    <property type="entry name" value="ValRS/IleRS/LeuRS editing domain"/>
    <property type="match status" value="1"/>
</dbReference>
<dbReference type="PROSITE" id="PS00178">
    <property type="entry name" value="AA_TRNA_LIGASE_I"/>
    <property type="match status" value="1"/>
</dbReference>
<keyword id="KW-0030">Aminoacyl-tRNA synthetase</keyword>
<keyword id="KW-0067">ATP-binding</keyword>
<keyword id="KW-0963">Cytoplasm</keyword>
<keyword id="KW-0436">Ligase</keyword>
<keyword id="KW-0479">Metal-binding</keyword>
<keyword id="KW-0547">Nucleotide-binding</keyword>
<keyword id="KW-0648">Protein biosynthesis</keyword>
<keyword id="KW-0862">Zinc</keyword>
<protein>
    <recommendedName>
        <fullName evidence="1">Isoleucine--tRNA ligase</fullName>
        <ecNumber evidence="1">6.1.1.5</ecNumber>
    </recommendedName>
    <alternativeName>
        <fullName evidence="1">Isoleucyl-tRNA synthetase</fullName>
        <shortName evidence="1">IleRS</shortName>
    </alternativeName>
</protein>
<reference key="1">
    <citation type="journal article" date="2003" name="Genome Res.">
        <title>Comparative genome analysis of Vibrio vulnificus, a marine pathogen.</title>
        <authorList>
            <person name="Chen C.-Y."/>
            <person name="Wu K.-M."/>
            <person name="Chang Y.-C."/>
            <person name="Chang C.-H."/>
            <person name="Tsai H.-C."/>
            <person name="Liao T.-L."/>
            <person name="Liu Y.-M."/>
            <person name="Chen H.-J."/>
            <person name="Shen A.B.-T."/>
            <person name="Li J.-C."/>
            <person name="Su T.-L."/>
            <person name="Shao C.-P."/>
            <person name="Lee C.-T."/>
            <person name="Hor L.-I."/>
            <person name="Tsai S.-F."/>
        </authorList>
    </citation>
    <scope>NUCLEOTIDE SEQUENCE [LARGE SCALE GENOMIC DNA]</scope>
    <source>
        <strain>YJ016</strain>
    </source>
</reference>
<evidence type="ECO:0000255" key="1">
    <source>
        <dbReference type="HAMAP-Rule" id="MF_02002"/>
    </source>
</evidence>
<sequence length="948" mass="105881">MSEYKDTLNLPETGFPMRGDLAKREPEMLKRWYQEDLYGEIRKAKKGKKSFVLHDGPPYANGDIHIGHALNKILKDIIIKSKTLSGFDAPYVPGWDCHGLPIELMVEKKVGKPGQKVTAAEFREKCREYAAGQVEGQKESFKRLGIMGEWDKPYRTMDFTTEANIIRALGQIADNGHLLKGFKPVHWCTDCGSALAEAEVEYKNKVSPSIDVRFKAADEAALLAKFSLNEGHQGQGDVSIVIWTTTPWTLPANRAVCLRDDLEYVLIQVEGDNPERIIVAAELAKDVMDRAGIEHFHNLGFAKGADLELTQFQHPFYDFTVPAILGDHVTTDSGTGVVHTAPGHGQEDFAVGQKYNLEVANPVGSNGVYLPDTELFAGQHVFKANDAVVETLKEKGALLHHHAYEHSYPHCWRHKTPIIFRATPQWFVSMDQAGLRAKALESIKGVQWMPEWGQSRIEGMIEGRPEWCISRQRTWGVPIALFVHKETAELHPNTSELIEKVAQVVEQKGIQAWWDIDAAELLGDDAAQYEKVLDTLDVWFDSGVTHYAVVDKREEFNGAEADMYLEGSDQHRGWFQSSLISSIAMKGKAPYKQVLTHGFVVDGHGRKMSKSIGNVVAPKDVTNKLGADILRLWVASTDYTGEVAVSDEILKRSADAYRRIRNTARFFLANLNGFNPETDIVPVEEMVALDRWAVGRALAAQNEIVKAYDEYNTHAVTQRLMHFCSIEMGSFYLDVIKDRQYTAKLGGHAQRSCQTALYYIVEALVRWMAPIMSFTADEIWNQMPASLPSGESRDKFVFTGEWFDGLFGLAEGEELNNAFWSEMQKVRGAVNKLLEAARSDKTIGGSLQAELTLFADDALAAKINKLEDELRFVLLTSAATVKPLSEKSDAAQATDIEGLFVEVRATEAEKCDRCWHHTPDVGTIEGHEKICGRCVSNVDGEGEARKFA</sequence>
<feature type="chain" id="PRO_0000098501" description="Isoleucine--tRNA ligase">
    <location>
        <begin position="1"/>
        <end position="948"/>
    </location>
</feature>
<feature type="short sequence motif" description="'HIGH' region">
    <location>
        <begin position="58"/>
        <end position="68"/>
    </location>
</feature>
<feature type="short sequence motif" description="'KMSKS' region">
    <location>
        <begin position="607"/>
        <end position="611"/>
    </location>
</feature>
<feature type="binding site" evidence="1">
    <location>
        <position position="566"/>
    </location>
    <ligand>
        <name>L-isoleucyl-5'-AMP</name>
        <dbReference type="ChEBI" id="CHEBI:178002"/>
    </ligand>
</feature>
<feature type="binding site" evidence="1">
    <location>
        <position position="610"/>
    </location>
    <ligand>
        <name>ATP</name>
        <dbReference type="ChEBI" id="CHEBI:30616"/>
    </ligand>
</feature>
<feature type="binding site" evidence="1">
    <location>
        <position position="911"/>
    </location>
    <ligand>
        <name>Zn(2+)</name>
        <dbReference type="ChEBI" id="CHEBI:29105"/>
    </ligand>
</feature>
<feature type="binding site" evidence="1">
    <location>
        <position position="914"/>
    </location>
    <ligand>
        <name>Zn(2+)</name>
        <dbReference type="ChEBI" id="CHEBI:29105"/>
    </ligand>
</feature>
<feature type="binding site" evidence="1">
    <location>
        <position position="931"/>
    </location>
    <ligand>
        <name>Zn(2+)</name>
        <dbReference type="ChEBI" id="CHEBI:29105"/>
    </ligand>
</feature>
<feature type="binding site" evidence="1">
    <location>
        <position position="934"/>
    </location>
    <ligand>
        <name>Zn(2+)</name>
        <dbReference type="ChEBI" id="CHEBI:29105"/>
    </ligand>
</feature>
<gene>
    <name evidence="1" type="primary">ileS</name>
    <name type="ordered locus">VV0687</name>
</gene>
<comment type="function">
    <text evidence="1">Catalyzes the attachment of isoleucine to tRNA(Ile). As IleRS can inadvertently accommodate and process structurally similar amino acids such as valine, to avoid such errors it has two additional distinct tRNA(Ile)-dependent editing activities. One activity is designated as 'pretransfer' editing and involves the hydrolysis of activated Val-AMP. The other activity is designated 'posttransfer' editing and involves deacylation of mischarged Val-tRNA(Ile).</text>
</comment>
<comment type="catalytic activity">
    <reaction evidence="1">
        <text>tRNA(Ile) + L-isoleucine + ATP = L-isoleucyl-tRNA(Ile) + AMP + diphosphate</text>
        <dbReference type="Rhea" id="RHEA:11060"/>
        <dbReference type="Rhea" id="RHEA-COMP:9666"/>
        <dbReference type="Rhea" id="RHEA-COMP:9695"/>
        <dbReference type="ChEBI" id="CHEBI:30616"/>
        <dbReference type="ChEBI" id="CHEBI:33019"/>
        <dbReference type="ChEBI" id="CHEBI:58045"/>
        <dbReference type="ChEBI" id="CHEBI:78442"/>
        <dbReference type="ChEBI" id="CHEBI:78528"/>
        <dbReference type="ChEBI" id="CHEBI:456215"/>
        <dbReference type="EC" id="6.1.1.5"/>
    </reaction>
</comment>
<comment type="cofactor">
    <cofactor evidence="1">
        <name>Zn(2+)</name>
        <dbReference type="ChEBI" id="CHEBI:29105"/>
    </cofactor>
    <text evidence="1">Binds 1 zinc ion per subunit.</text>
</comment>
<comment type="subunit">
    <text evidence="1">Monomer.</text>
</comment>
<comment type="subcellular location">
    <subcellularLocation>
        <location evidence="1">Cytoplasm</location>
    </subcellularLocation>
</comment>
<comment type="domain">
    <text evidence="1">IleRS has two distinct active sites: one for aminoacylation and one for editing. The misactivated valine is translocated from the active site to the editing site, which sterically excludes the correctly activated isoleucine. The single editing site contains two valyl binding pockets, one specific for each substrate (Val-AMP or Val-tRNA(Ile)).</text>
</comment>
<comment type="similarity">
    <text evidence="1">Belongs to the class-I aminoacyl-tRNA synthetase family. IleS type 1 subfamily.</text>
</comment>
<organism>
    <name type="scientific">Vibrio vulnificus (strain YJ016)</name>
    <dbReference type="NCBI Taxonomy" id="196600"/>
    <lineage>
        <taxon>Bacteria</taxon>
        <taxon>Pseudomonadati</taxon>
        <taxon>Pseudomonadota</taxon>
        <taxon>Gammaproteobacteria</taxon>
        <taxon>Vibrionales</taxon>
        <taxon>Vibrionaceae</taxon>
        <taxon>Vibrio</taxon>
    </lineage>
</organism>